<keyword id="KW-0963">Cytoplasm</keyword>
<keyword id="KW-0251">Elongation factor</keyword>
<keyword id="KW-0648">Protein biosynthesis</keyword>
<keyword id="KW-1185">Reference proteome</keyword>
<evidence type="ECO:0000255" key="1">
    <source>
        <dbReference type="HAMAP-Rule" id="MF_00141"/>
    </source>
</evidence>
<comment type="function">
    <text evidence="1">Involved in peptide bond synthesis. Stimulates efficient translation and peptide-bond synthesis on native or reconstituted 70S ribosomes in vitro. Probably functions indirectly by altering the affinity of the ribosome for aminoacyl-tRNA, thus increasing their reactivity as acceptors for peptidyl transferase.</text>
</comment>
<comment type="pathway">
    <text evidence="1">Protein biosynthesis; polypeptide chain elongation.</text>
</comment>
<comment type="subcellular location">
    <subcellularLocation>
        <location evidence="1">Cytoplasm</location>
    </subcellularLocation>
</comment>
<comment type="similarity">
    <text evidence="1">Belongs to the elongation factor P family.</text>
</comment>
<organism>
    <name type="scientific">Campylobacter jejuni subsp. jejuni serotype O:2 (strain ATCC 700819 / NCTC 11168)</name>
    <dbReference type="NCBI Taxonomy" id="192222"/>
    <lineage>
        <taxon>Bacteria</taxon>
        <taxon>Pseudomonadati</taxon>
        <taxon>Campylobacterota</taxon>
        <taxon>Epsilonproteobacteria</taxon>
        <taxon>Campylobacterales</taxon>
        <taxon>Campylobacteraceae</taxon>
        <taxon>Campylobacter</taxon>
    </lineage>
</organism>
<name>EFP_CAMJE</name>
<reference key="1">
    <citation type="journal article" date="2000" name="Nature">
        <title>The genome sequence of the food-borne pathogen Campylobacter jejuni reveals hypervariable sequences.</title>
        <authorList>
            <person name="Parkhill J."/>
            <person name="Wren B.W."/>
            <person name="Mungall K.L."/>
            <person name="Ketley J.M."/>
            <person name="Churcher C.M."/>
            <person name="Basham D."/>
            <person name="Chillingworth T."/>
            <person name="Davies R.M."/>
            <person name="Feltwell T."/>
            <person name="Holroyd S."/>
            <person name="Jagels K."/>
            <person name="Karlyshev A.V."/>
            <person name="Moule S."/>
            <person name="Pallen M.J."/>
            <person name="Penn C.W."/>
            <person name="Quail M.A."/>
            <person name="Rajandream M.A."/>
            <person name="Rutherford K.M."/>
            <person name="van Vliet A.H.M."/>
            <person name="Whitehead S."/>
            <person name="Barrell B.G."/>
        </authorList>
    </citation>
    <scope>NUCLEOTIDE SEQUENCE [LARGE SCALE GENOMIC DNA]</scope>
    <source>
        <strain>ATCC 700819 / NCTC 11168</strain>
    </source>
</reference>
<feature type="chain" id="PRO_0000094221" description="Elongation factor P">
    <location>
        <begin position="1"/>
        <end position="189"/>
    </location>
</feature>
<proteinExistence type="inferred from homology"/>
<sequence>MASYSMGDLKKGLKIEIDGIPFKIVEYQHVKPGKGPAFVRIKIKSFIDGKVLEKTFHAGDKCEAPNLEDKTMQYLYDDGENCQFMDTQTYEQVAISDDDVGEAKKWMLDGMMVDVLFHNGKAIGVEVPQVVELKIIETAPNFKGDTQGSNKKPATLETGAVVQIPFHVLEGEVIRVDTVRGEYIERANK</sequence>
<protein>
    <recommendedName>
        <fullName evidence="1">Elongation factor P</fullName>
        <shortName evidence="1">EF-P</shortName>
    </recommendedName>
</protein>
<dbReference type="EMBL" id="AL111168">
    <property type="protein sequence ID" value="CAL34697.1"/>
    <property type="molecule type" value="Genomic_DNA"/>
</dbReference>
<dbReference type="PIR" id="G81401">
    <property type="entry name" value="G81401"/>
</dbReference>
<dbReference type="RefSeq" id="WP_002855210.1">
    <property type="nucleotide sequence ID" value="NZ_SZUC01000002.1"/>
</dbReference>
<dbReference type="RefSeq" id="YP_002343982.1">
    <property type="nucleotide sequence ID" value="NC_002163.1"/>
</dbReference>
<dbReference type="SMR" id="Q9PHW3"/>
<dbReference type="IntAct" id="Q9PHW3">
    <property type="interactions" value="45"/>
</dbReference>
<dbReference type="STRING" id="192222.Cj0551"/>
<dbReference type="PaxDb" id="192222-Cj0551"/>
<dbReference type="EnsemblBacteria" id="CAL34697">
    <property type="protein sequence ID" value="CAL34697"/>
    <property type="gene ID" value="Cj0551"/>
</dbReference>
<dbReference type="GeneID" id="904879"/>
<dbReference type="KEGG" id="cje:Cj0551"/>
<dbReference type="PATRIC" id="fig|192222.6.peg.543"/>
<dbReference type="eggNOG" id="COG0231">
    <property type="taxonomic scope" value="Bacteria"/>
</dbReference>
<dbReference type="HOGENOM" id="CLU_074944_0_1_7"/>
<dbReference type="OrthoDB" id="9801844at2"/>
<dbReference type="UniPathway" id="UPA00345"/>
<dbReference type="Proteomes" id="UP000000799">
    <property type="component" value="Chromosome"/>
</dbReference>
<dbReference type="GO" id="GO:0005737">
    <property type="term" value="C:cytoplasm"/>
    <property type="evidence" value="ECO:0007669"/>
    <property type="project" value="UniProtKB-SubCell"/>
</dbReference>
<dbReference type="GO" id="GO:0003746">
    <property type="term" value="F:translation elongation factor activity"/>
    <property type="evidence" value="ECO:0007669"/>
    <property type="project" value="UniProtKB-UniRule"/>
</dbReference>
<dbReference type="GO" id="GO:0043043">
    <property type="term" value="P:peptide biosynthetic process"/>
    <property type="evidence" value="ECO:0007669"/>
    <property type="project" value="InterPro"/>
</dbReference>
<dbReference type="CDD" id="cd04470">
    <property type="entry name" value="S1_EF-P_repeat_1"/>
    <property type="match status" value="1"/>
</dbReference>
<dbReference type="CDD" id="cd05794">
    <property type="entry name" value="S1_EF-P_repeat_2"/>
    <property type="match status" value="1"/>
</dbReference>
<dbReference type="FunFam" id="2.30.30.30:FF:000003">
    <property type="entry name" value="Elongation factor P"/>
    <property type="match status" value="1"/>
</dbReference>
<dbReference type="FunFam" id="2.40.50.140:FF:000004">
    <property type="entry name" value="Elongation factor P"/>
    <property type="match status" value="1"/>
</dbReference>
<dbReference type="FunFam" id="2.40.50.140:FF:000009">
    <property type="entry name" value="Elongation factor P"/>
    <property type="match status" value="1"/>
</dbReference>
<dbReference type="Gene3D" id="2.30.30.30">
    <property type="match status" value="1"/>
</dbReference>
<dbReference type="Gene3D" id="2.40.50.140">
    <property type="entry name" value="Nucleic acid-binding proteins"/>
    <property type="match status" value="2"/>
</dbReference>
<dbReference type="HAMAP" id="MF_00141">
    <property type="entry name" value="EF_P"/>
    <property type="match status" value="1"/>
</dbReference>
<dbReference type="InterPro" id="IPR015365">
    <property type="entry name" value="Elong-fact-P_C"/>
</dbReference>
<dbReference type="InterPro" id="IPR012340">
    <property type="entry name" value="NA-bd_OB-fold"/>
</dbReference>
<dbReference type="InterPro" id="IPR014722">
    <property type="entry name" value="Rib_uL2_dom2"/>
</dbReference>
<dbReference type="InterPro" id="IPR020599">
    <property type="entry name" value="Transl_elong_fac_P/YeiP"/>
</dbReference>
<dbReference type="InterPro" id="IPR013185">
    <property type="entry name" value="Transl_elong_KOW-like"/>
</dbReference>
<dbReference type="InterPro" id="IPR001059">
    <property type="entry name" value="Transl_elong_P/YeiP_cen"/>
</dbReference>
<dbReference type="InterPro" id="IPR011768">
    <property type="entry name" value="Transl_elongation_fac_P"/>
</dbReference>
<dbReference type="InterPro" id="IPR008991">
    <property type="entry name" value="Translation_prot_SH3-like_sf"/>
</dbReference>
<dbReference type="NCBIfam" id="TIGR00038">
    <property type="entry name" value="efp"/>
    <property type="match status" value="1"/>
</dbReference>
<dbReference type="NCBIfam" id="NF001810">
    <property type="entry name" value="PRK00529.1"/>
    <property type="match status" value="1"/>
</dbReference>
<dbReference type="PANTHER" id="PTHR30053">
    <property type="entry name" value="ELONGATION FACTOR P"/>
    <property type="match status" value="1"/>
</dbReference>
<dbReference type="PANTHER" id="PTHR30053:SF12">
    <property type="entry name" value="ELONGATION FACTOR P (EF-P) FAMILY PROTEIN"/>
    <property type="match status" value="1"/>
</dbReference>
<dbReference type="Pfam" id="PF01132">
    <property type="entry name" value="EFP"/>
    <property type="match status" value="1"/>
</dbReference>
<dbReference type="Pfam" id="PF08207">
    <property type="entry name" value="EFP_N"/>
    <property type="match status" value="1"/>
</dbReference>
<dbReference type="Pfam" id="PF09285">
    <property type="entry name" value="Elong-fact-P_C"/>
    <property type="match status" value="1"/>
</dbReference>
<dbReference type="PIRSF" id="PIRSF005901">
    <property type="entry name" value="EF-P"/>
    <property type="match status" value="1"/>
</dbReference>
<dbReference type="SMART" id="SM01185">
    <property type="entry name" value="EFP"/>
    <property type="match status" value="1"/>
</dbReference>
<dbReference type="SMART" id="SM00841">
    <property type="entry name" value="Elong-fact-P_C"/>
    <property type="match status" value="1"/>
</dbReference>
<dbReference type="SUPFAM" id="SSF50249">
    <property type="entry name" value="Nucleic acid-binding proteins"/>
    <property type="match status" value="2"/>
</dbReference>
<dbReference type="SUPFAM" id="SSF50104">
    <property type="entry name" value="Translation proteins SH3-like domain"/>
    <property type="match status" value="1"/>
</dbReference>
<accession>Q9PHW3</accession>
<accession>Q0PAW5</accession>
<gene>
    <name evidence="1" type="primary">efp</name>
    <name type="ordered locus">Cj0551</name>
</gene>